<name>PUR9_CUPPJ</name>
<comment type="catalytic activity">
    <reaction evidence="1">
        <text>(6R)-10-formyltetrahydrofolate + 5-amino-1-(5-phospho-beta-D-ribosyl)imidazole-4-carboxamide = 5-formamido-1-(5-phospho-D-ribosyl)imidazole-4-carboxamide + (6S)-5,6,7,8-tetrahydrofolate</text>
        <dbReference type="Rhea" id="RHEA:22192"/>
        <dbReference type="ChEBI" id="CHEBI:57453"/>
        <dbReference type="ChEBI" id="CHEBI:58467"/>
        <dbReference type="ChEBI" id="CHEBI:58475"/>
        <dbReference type="ChEBI" id="CHEBI:195366"/>
        <dbReference type="EC" id="2.1.2.3"/>
    </reaction>
</comment>
<comment type="catalytic activity">
    <reaction evidence="1">
        <text>IMP + H2O = 5-formamido-1-(5-phospho-D-ribosyl)imidazole-4-carboxamide</text>
        <dbReference type="Rhea" id="RHEA:18445"/>
        <dbReference type="ChEBI" id="CHEBI:15377"/>
        <dbReference type="ChEBI" id="CHEBI:58053"/>
        <dbReference type="ChEBI" id="CHEBI:58467"/>
        <dbReference type="EC" id="3.5.4.10"/>
    </reaction>
</comment>
<comment type="pathway">
    <text evidence="1">Purine metabolism; IMP biosynthesis via de novo pathway; 5-formamido-1-(5-phospho-D-ribosyl)imidazole-4-carboxamide from 5-amino-1-(5-phospho-D-ribosyl)imidazole-4-carboxamide (10-formyl THF route): step 1/1.</text>
</comment>
<comment type="pathway">
    <text evidence="1">Purine metabolism; IMP biosynthesis via de novo pathway; IMP from 5-formamido-1-(5-phospho-D-ribosyl)imidazole-4-carboxamide: step 1/1.</text>
</comment>
<comment type="domain">
    <text evidence="1">The IMP cyclohydrolase activity resides in the N-terminal region.</text>
</comment>
<comment type="similarity">
    <text evidence="1">Belongs to the PurH family.</text>
</comment>
<feature type="chain" id="PRO_1000018945" description="Bifunctional purine biosynthesis protein PurH">
    <location>
        <begin position="1"/>
        <end position="523"/>
    </location>
</feature>
<feature type="domain" description="MGS-like" evidence="2">
    <location>
        <begin position="1"/>
        <end position="145"/>
    </location>
</feature>
<keyword id="KW-0378">Hydrolase</keyword>
<keyword id="KW-0511">Multifunctional enzyme</keyword>
<keyword id="KW-0658">Purine biosynthesis</keyword>
<keyword id="KW-0808">Transferase</keyword>
<proteinExistence type="inferred from homology"/>
<protein>
    <recommendedName>
        <fullName evidence="1">Bifunctional purine biosynthesis protein PurH</fullName>
    </recommendedName>
    <domain>
        <recommendedName>
            <fullName evidence="1">Phosphoribosylaminoimidazolecarboxamide formyltransferase</fullName>
            <ecNumber evidence="1">2.1.2.3</ecNumber>
        </recommendedName>
        <alternativeName>
            <fullName evidence="1">AICAR transformylase</fullName>
        </alternativeName>
    </domain>
    <domain>
        <recommendedName>
            <fullName evidence="1">IMP cyclohydrolase</fullName>
            <ecNumber evidence="1">3.5.4.10</ecNumber>
        </recommendedName>
        <alternativeName>
            <fullName evidence="1">ATIC</fullName>
        </alternativeName>
        <alternativeName>
            <fullName evidence="1">IMP synthase</fullName>
        </alternativeName>
        <alternativeName>
            <fullName evidence="1">Inosinicase</fullName>
        </alternativeName>
    </domain>
</protein>
<organism>
    <name type="scientific">Cupriavidus pinatubonensis (strain JMP 134 / LMG 1197)</name>
    <name type="common">Cupriavidus necator (strain JMP 134)</name>
    <dbReference type="NCBI Taxonomy" id="264198"/>
    <lineage>
        <taxon>Bacteria</taxon>
        <taxon>Pseudomonadati</taxon>
        <taxon>Pseudomonadota</taxon>
        <taxon>Betaproteobacteria</taxon>
        <taxon>Burkholderiales</taxon>
        <taxon>Burkholderiaceae</taxon>
        <taxon>Cupriavidus</taxon>
    </lineage>
</organism>
<sequence length="523" mass="55980">MIKQALLSVSDKTGIVEFARELNALGVTLLSTGGTAKLLADSGLPVTEVADYTGFPEMLDGRVKTLHPKVHGGILARRDLPEHMAALAEHDIPTIDLLVVNLYPFQQTVAKDDCTLPDAIENIDIGGPTMLRSAAKNHRDVTVIVDPVDYAVVLDEMRANGNKVGYDTNFRLATKVFAHTAQYDGAITNYLTSLGADKSHQARSAYPQTLNLAFEKVQEMRYGENPHQSAAFYRDLKAVDGALANYVQLQGKELSYNNIADADAAWECVKSFAVTTPACVIIKHANPCGVAVGANALEAYDKAFKTDSTSAFGGIIAFNVELDETAAQAVAKQFVEVLIAPSFSAAARAVFASKQNVRLLEIPLGKGINQYDLKRVGGGLLVQSPDAKNVQPTELRVVTRRHPTPKEMDDLMFAWRVAKFVKSNAIVFCGGGMTLGVGAGQMSRVDSARIASIKAQNAGLTLAGSAVASDAFFPFRDGLDVVVDAGATCVIQPGGSMRDDEVIAAADDRGIAMVLTGTRHFRH</sequence>
<accession>Q475R4</accession>
<gene>
    <name evidence="1" type="primary">purH</name>
    <name type="ordered locus">Reut_A0487</name>
</gene>
<reference key="1">
    <citation type="journal article" date="2010" name="PLoS ONE">
        <title>The complete multipartite genome sequence of Cupriavidus necator JMP134, a versatile pollutant degrader.</title>
        <authorList>
            <person name="Lykidis A."/>
            <person name="Perez-Pantoja D."/>
            <person name="Ledger T."/>
            <person name="Mavromatis K."/>
            <person name="Anderson I.J."/>
            <person name="Ivanova N.N."/>
            <person name="Hooper S.D."/>
            <person name="Lapidus A."/>
            <person name="Lucas S."/>
            <person name="Gonzalez B."/>
            <person name="Kyrpides N.C."/>
        </authorList>
    </citation>
    <scope>NUCLEOTIDE SEQUENCE [LARGE SCALE GENOMIC DNA]</scope>
    <source>
        <strain>JMP134 / LMG 1197</strain>
    </source>
</reference>
<dbReference type="EC" id="2.1.2.3" evidence="1"/>
<dbReference type="EC" id="3.5.4.10" evidence="1"/>
<dbReference type="EMBL" id="CP000090">
    <property type="protein sequence ID" value="AAZ59869.1"/>
    <property type="molecule type" value="Genomic_DNA"/>
</dbReference>
<dbReference type="SMR" id="Q475R4"/>
<dbReference type="STRING" id="264198.Reut_A0487"/>
<dbReference type="KEGG" id="reu:Reut_A0487"/>
<dbReference type="eggNOG" id="COG0138">
    <property type="taxonomic scope" value="Bacteria"/>
</dbReference>
<dbReference type="HOGENOM" id="CLU_016316_5_2_4"/>
<dbReference type="OrthoDB" id="9802065at2"/>
<dbReference type="UniPathway" id="UPA00074">
    <property type="reaction ID" value="UER00133"/>
</dbReference>
<dbReference type="UniPathway" id="UPA00074">
    <property type="reaction ID" value="UER00135"/>
</dbReference>
<dbReference type="GO" id="GO:0005829">
    <property type="term" value="C:cytosol"/>
    <property type="evidence" value="ECO:0007669"/>
    <property type="project" value="TreeGrafter"/>
</dbReference>
<dbReference type="GO" id="GO:0003937">
    <property type="term" value="F:IMP cyclohydrolase activity"/>
    <property type="evidence" value="ECO:0007669"/>
    <property type="project" value="UniProtKB-UniRule"/>
</dbReference>
<dbReference type="GO" id="GO:0004643">
    <property type="term" value="F:phosphoribosylaminoimidazolecarboxamide formyltransferase activity"/>
    <property type="evidence" value="ECO:0007669"/>
    <property type="project" value="UniProtKB-UniRule"/>
</dbReference>
<dbReference type="GO" id="GO:0006189">
    <property type="term" value="P:'de novo' IMP biosynthetic process"/>
    <property type="evidence" value="ECO:0007669"/>
    <property type="project" value="UniProtKB-UniRule"/>
</dbReference>
<dbReference type="CDD" id="cd01421">
    <property type="entry name" value="IMPCH"/>
    <property type="match status" value="1"/>
</dbReference>
<dbReference type="FunFam" id="3.40.140.20:FF:000001">
    <property type="entry name" value="Bifunctional purine biosynthesis protein PurH"/>
    <property type="match status" value="1"/>
</dbReference>
<dbReference type="FunFam" id="3.40.140.20:FF:000002">
    <property type="entry name" value="Bifunctional purine biosynthesis protein PurH"/>
    <property type="match status" value="1"/>
</dbReference>
<dbReference type="FunFam" id="3.40.50.1380:FF:000001">
    <property type="entry name" value="Bifunctional purine biosynthesis protein PurH"/>
    <property type="match status" value="1"/>
</dbReference>
<dbReference type="Gene3D" id="3.40.140.20">
    <property type="match status" value="2"/>
</dbReference>
<dbReference type="Gene3D" id="3.40.50.1380">
    <property type="entry name" value="Methylglyoxal synthase-like domain"/>
    <property type="match status" value="1"/>
</dbReference>
<dbReference type="HAMAP" id="MF_00139">
    <property type="entry name" value="PurH"/>
    <property type="match status" value="1"/>
</dbReference>
<dbReference type="InterPro" id="IPR024051">
    <property type="entry name" value="AICAR_Tfase_dup_dom_sf"/>
</dbReference>
<dbReference type="InterPro" id="IPR016193">
    <property type="entry name" value="Cytidine_deaminase-like"/>
</dbReference>
<dbReference type="InterPro" id="IPR011607">
    <property type="entry name" value="MGS-like_dom"/>
</dbReference>
<dbReference type="InterPro" id="IPR036914">
    <property type="entry name" value="MGS-like_dom_sf"/>
</dbReference>
<dbReference type="InterPro" id="IPR002695">
    <property type="entry name" value="PurH-like"/>
</dbReference>
<dbReference type="NCBIfam" id="NF002049">
    <property type="entry name" value="PRK00881.1"/>
    <property type="match status" value="1"/>
</dbReference>
<dbReference type="NCBIfam" id="TIGR00355">
    <property type="entry name" value="purH"/>
    <property type="match status" value="1"/>
</dbReference>
<dbReference type="PANTHER" id="PTHR11692:SF0">
    <property type="entry name" value="BIFUNCTIONAL PURINE BIOSYNTHESIS PROTEIN ATIC"/>
    <property type="match status" value="1"/>
</dbReference>
<dbReference type="PANTHER" id="PTHR11692">
    <property type="entry name" value="BIFUNCTIONAL PURINE BIOSYNTHESIS PROTEIN PURH"/>
    <property type="match status" value="1"/>
</dbReference>
<dbReference type="Pfam" id="PF01808">
    <property type="entry name" value="AICARFT_IMPCHas"/>
    <property type="match status" value="1"/>
</dbReference>
<dbReference type="Pfam" id="PF02142">
    <property type="entry name" value="MGS"/>
    <property type="match status" value="1"/>
</dbReference>
<dbReference type="PIRSF" id="PIRSF000414">
    <property type="entry name" value="AICARFT_IMPCHas"/>
    <property type="match status" value="1"/>
</dbReference>
<dbReference type="SMART" id="SM00798">
    <property type="entry name" value="AICARFT_IMPCHas"/>
    <property type="match status" value="1"/>
</dbReference>
<dbReference type="SMART" id="SM00851">
    <property type="entry name" value="MGS"/>
    <property type="match status" value="1"/>
</dbReference>
<dbReference type="SUPFAM" id="SSF53927">
    <property type="entry name" value="Cytidine deaminase-like"/>
    <property type="match status" value="1"/>
</dbReference>
<dbReference type="SUPFAM" id="SSF52335">
    <property type="entry name" value="Methylglyoxal synthase-like"/>
    <property type="match status" value="1"/>
</dbReference>
<dbReference type="PROSITE" id="PS51855">
    <property type="entry name" value="MGS"/>
    <property type="match status" value="1"/>
</dbReference>
<evidence type="ECO:0000255" key="1">
    <source>
        <dbReference type="HAMAP-Rule" id="MF_00139"/>
    </source>
</evidence>
<evidence type="ECO:0000255" key="2">
    <source>
        <dbReference type="PROSITE-ProRule" id="PRU01202"/>
    </source>
</evidence>